<proteinExistence type="inferred from homology"/>
<reference key="1">
    <citation type="journal article" date="2009" name="Genome Biol.">
        <title>Genomic and genetic analyses of diversity and plant interactions of Pseudomonas fluorescens.</title>
        <authorList>
            <person name="Silby M.W."/>
            <person name="Cerdeno-Tarraga A.M."/>
            <person name="Vernikos G.S."/>
            <person name="Giddens S.R."/>
            <person name="Jackson R.W."/>
            <person name="Preston G.M."/>
            <person name="Zhang X.-X."/>
            <person name="Moon C.D."/>
            <person name="Gehrig S.M."/>
            <person name="Godfrey S.A.C."/>
            <person name="Knight C.G."/>
            <person name="Malone J.G."/>
            <person name="Robinson Z."/>
            <person name="Spiers A.J."/>
            <person name="Harris S."/>
            <person name="Challis G.L."/>
            <person name="Yaxley A.M."/>
            <person name="Harris D."/>
            <person name="Seeger K."/>
            <person name="Murphy L."/>
            <person name="Rutter S."/>
            <person name="Squares R."/>
            <person name="Quail M.A."/>
            <person name="Saunders E."/>
            <person name="Mavromatis K."/>
            <person name="Brettin T.S."/>
            <person name="Bentley S.D."/>
            <person name="Hothersall J."/>
            <person name="Stephens E."/>
            <person name="Thomas C.M."/>
            <person name="Parkhill J."/>
            <person name="Levy S.B."/>
            <person name="Rainey P.B."/>
            <person name="Thomson N.R."/>
        </authorList>
    </citation>
    <scope>NUCLEOTIDE SEQUENCE [LARGE SCALE GENOMIC DNA]</scope>
    <source>
        <strain>Pf0-1</strain>
    </source>
</reference>
<feature type="chain" id="PRO_0000305516" description="Pantothenate synthetase">
    <location>
        <begin position="1"/>
        <end position="286"/>
    </location>
</feature>
<feature type="active site" description="Proton donor" evidence="1">
    <location>
        <position position="37"/>
    </location>
</feature>
<feature type="binding site" evidence="1">
    <location>
        <begin position="30"/>
        <end position="37"/>
    </location>
    <ligand>
        <name>ATP</name>
        <dbReference type="ChEBI" id="CHEBI:30616"/>
    </ligand>
</feature>
<feature type="binding site" evidence="1">
    <location>
        <position position="61"/>
    </location>
    <ligand>
        <name>(R)-pantoate</name>
        <dbReference type="ChEBI" id="CHEBI:15980"/>
    </ligand>
</feature>
<feature type="binding site" evidence="1">
    <location>
        <position position="61"/>
    </location>
    <ligand>
        <name>beta-alanine</name>
        <dbReference type="ChEBI" id="CHEBI:57966"/>
    </ligand>
</feature>
<feature type="binding site" evidence="1">
    <location>
        <begin position="149"/>
        <end position="152"/>
    </location>
    <ligand>
        <name>ATP</name>
        <dbReference type="ChEBI" id="CHEBI:30616"/>
    </ligand>
</feature>
<feature type="binding site" evidence="1">
    <location>
        <position position="155"/>
    </location>
    <ligand>
        <name>(R)-pantoate</name>
        <dbReference type="ChEBI" id="CHEBI:15980"/>
    </ligand>
</feature>
<feature type="binding site" evidence="1">
    <location>
        <position position="178"/>
    </location>
    <ligand>
        <name>ATP</name>
        <dbReference type="ChEBI" id="CHEBI:30616"/>
    </ligand>
</feature>
<feature type="binding site" evidence="1">
    <location>
        <begin position="186"/>
        <end position="189"/>
    </location>
    <ligand>
        <name>ATP</name>
        <dbReference type="ChEBI" id="CHEBI:30616"/>
    </ligand>
</feature>
<accession>Q3K6Q5</accession>
<gene>
    <name evidence="1" type="primary">panC</name>
    <name type="ordered locus">Pfl01_4812</name>
</gene>
<sequence>MNTVKTVRELRAAVARARSEGKRIGFVPTMGNLHSGHIALITKATQRVDFVVASIFVNPLQFGAGEDLDKYPRTLAADQEKLLEAGCDLLFAPTVEEMYPDGMAGQTRVSVPQLSEGLCGASRPGHFEGVATVVSKLFNMVQPDLAIFGQKDFQQLAVIRALVHDLNMPIQIIGEPTVRAADGLALSSRNGFLSEEERAVAPVVYRTLSSIAESIKQGERDFPALIQAQRQQLEAAGLRPDYLEIRHALTLRPATAEDRDLVILVAAFLGTTRLIDNLHLNLDTPA</sequence>
<name>PANC_PSEPF</name>
<comment type="function">
    <text evidence="1">Catalyzes the condensation of pantoate with beta-alanine in an ATP-dependent reaction via a pantoyl-adenylate intermediate.</text>
</comment>
<comment type="catalytic activity">
    <reaction evidence="1">
        <text>(R)-pantoate + beta-alanine + ATP = (R)-pantothenate + AMP + diphosphate + H(+)</text>
        <dbReference type="Rhea" id="RHEA:10912"/>
        <dbReference type="ChEBI" id="CHEBI:15378"/>
        <dbReference type="ChEBI" id="CHEBI:15980"/>
        <dbReference type="ChEBI" id="CHEBI:29032"/>
        <dbReference type="ChEBI" id="CHEBI:30616"/>
        <dbReference type="ChEBI" id="CHEBI:33019"/>
        <dbReference type="ChEBI" id="CHEBI:57966"/>
        <dbReference type="ChEBI" id="CHEBI:456215"/>
        <dbReference type="EC" id="6.3.2.1"/>
    </reaction>
</comment>
<comment type="pathway">
    <text evidence="1">Cofactor biosynthesis; (R)-pantothenate biosynthesis; (R)-pantothenate from (R)-pantoate and beta-alanine: step 1/1.</text>
</comment>
<comment type="subunit">
    <text evidence="1">Homodimer.</text>
</comment>
<comment type="subcellular location">
    <subcellularLocation>
        <location evidence="1">Cytoplasm</location>
    </subcellularLocation>
</comment>
<comment type="miscellaneous">
    <text evidence="1">The reaction proceeds by a bi uni uni bi ping pong mechanism.</text>
</comment>
<comment type="similarity">
    <text evidence="1">Belongs to the pantothenate synthetase family.</text>
</comment>
<keyword id="KW-0067">ATP-binding</keyword>
<keyword id="KW-0963">Cytoplasm</keyword>
<keyword id="KW-0436">Ligase</keyword>
<keyword id="KW-0547">Nucleotide-binding</keyword>
<keyword id="KW-0566">Pantothenate biosynthesis</keyword>
<dbReference type="EC" id="6.3.2.1" evidence="1"/>
<dbReference type="EMBL" id="CP000094">
    <property type="protein sequence ID" value="ABA76549.1"/>
    <property type="molecule type" value="Genomic_DNA"/>
</dbReference>
<dbReference type="RefSeq" id="WP_011335971.1">
    <property type="nucleotide sequence ID" value="NC_007492.2"/>
</dbReference>
<dbReference type="SMR" id="Q3K6Q5"/>
<dbReference type="KEGG" id="pfo:Pfl01_4812"/>
<dbReference type="eggNOG" id="COG0414">
    <property type="taxonomic scope" value="Bacteria"/>
</dbReference>
<dbReference type="HOGENOM" id="CLU_047148_0_0_6"/>
<dbReference type="UniPathway" id="UPA00028">
    <property type="reaction ID" value="UER00005"/>
</dbReference>
<dbReference type="Proteomes" id="UP000002704">
    <property type="component" value="Chromosome"/>
</dbReference>
<dbReference type="GO" id="GO:0005829">
    <property type="term" value="C:cytosol"/>
    <property type="evidence" value="ECO:0007669"/>
    <property type="project" value="TreeGrafter"/>
</dbReference>
<dbReference type="GO" id="GO:0005524">
    <property type="term" value="F:ATP binding"/>
    <property type="evidence" value="ECO:0007669"/>
    <property type="project" value="UniProtKB-KW"/>
</dbReference>
<dbReference type="GO" id="GO:0004592">
    <property type="term" value="F:pantoate-beta-alanine ligase activity"/>
    <property type="evidence" value="ECO:0007669"/>
    <property type="project" value="UniProtKB-UniRule"/>
</dbReference>
<dbReference type="GO" id="GO:0015940">
    <property type="term" value="P:pantothenate biosynthetic process"/>
    <property type="evidence" value="ECO:0007669"/>
    <property type="project" value="UniProtKB-UniRule"/>
</dbReference>
<dbReference type="CDD" id="cd00560">
    <property type="entry name" value="PanC"/>
    <property type="match status" value="1"/>
</dbReference>
<dbReference type="FunFam" id="3.30.1300.10:FF:000001">
    <property type="entry name" value="Pantothenate synthetase"/>
    <property type="match status" value="1"/>
</dbReference>
<dbReference type="FunFam" id="3.40.50.620:FF:000013">
    <property type="entry name" value="Pantothenate synthetase"/>
    <property type="match status" value="1"/>
</dbReference>
<dbReference type="Gene3D" id="3.40.50.620">
    <property type="entry name" value="HUPs"/>
    <property type="match status" value="1"/>
</dbReference>
<dbReference type="Gene3D" id="3.30.1300.10">
    <property type="entry name" value="Pantoate-beta-alanine ligase, C-terminal domain"/>
    <property type="match status" value="1"/>
</dbReference>
<dbReference type="HAMAP" id="MF_00158">
    <property type="entry name" value="PanC"/>
    <property type="match status" value="1"/>
</dbReference>
<dbReference type="InterPro" id="IPR003721">
    <property type="entry name" value="Pantoate_ligase"/>
</dbReference>
<dbReference type="InterPro" id="IPR042176">
    <property type="entry name" value="Pantoate_ligase_C"/>
</dbReference>
<dbReference type="InterPro" id="IPR014729">
    <property type="entry name" value="Rossmann-like_a/b/a_fold"/>
</dbReference>
<dbReference type="NCBIfam" id="TIGR00018">
    <property type="entry name" value="panC"/>
    <property type="match status" value="1"/>
</dbReference>
<dbReference type="PANTHER" id="PTHR21299">
    <property type="entry name" value="CYTIDYLATE KINASE/PANTOATE-BETA-ALANINE LIGASE"/>
    <property type="match status" value="1"/>
</dbReference>
<dbReference type="PANTHER" id="PTHR21299:SF1">
    <property type="entry name" value="PANTOATE--BETA-ALANINE LIGASE"/>
    <property type="match status" value="1"/>
</dbReference>
<dbReference type="Pfam" id="PF02569">
    <property type="entry name" value="Pantoate_ligase"/>
    <property type="match status" value="1"/>
</dbReference>
<dbReference type="SUPFAM" id="SSF52374">
    <property type="entry name" value="Nucleotidylyl transferase"/>
    <property type="match status" value="1"/>
</dbReference>
<organism>
    <name type="scientific">Pseudomonas fluorescens (strain Pf0-1)</name>
    <dbReference type="NCBI Taxonomy" id="205922"/>
    <lineage>
        <taxon>Bacteria</taxon>
        <taxon>Pseudomonadati</taxon>
        <taxon>Pseudomonadota</taxon>
        <taxon>Gammaproteobacteria</taxon>
        <taxon>Pseudomonadales</taxon>
        <taxon>Pseudomonadaceae</taxon>
        <taxon>Pseudomonas</taxon>
    </lineage>
</organism>
<protein>
    <recommendedName>
        <fullName evidence="1">Pantothenate synthetase</fullName>
        <shortName evidence="1">PS</shortName>
        <ecNumber evidence="1">6.3.2.1</ecNumber>
    </recommendedName>
    <alternativeName>
        <fullName evidence="1">Pantoate--beta-alanine ligase</fullName>
    </alternativeName>
    <alternativeName>
        <fullName evidence="1">Pantoate-activating enzyme</fullName>
    </alternativeName>
</protein>
<evidence type="ECO:0000255" key="1">
    <source>
        <dbReference type="HAMAP-Rule" id="MF_00158"/>
    </source>
</evidence>